<organism>
    <name type="scientific">Orgyia pseudotsugata multicapsid polyhedrosis virus</name>
    <name type="common">OpMNPV</name>
    <dbReference type="NCBI Taxonomy" id="262177"/>
    <lineage>
        <taxon>Viruses</taxon>
        <taxon>Viruses incertae sedis</taxon>
        <taxon>Naldaviricetes</taxon>
        <taxon>Lefavirales</taxon>
        <taxon>Baculoviridae</taxon>
        <taxon>Alphabaculovirus</taxon>
        <taxon>Alphabaculovirus orpseudotsugatae</taxon>
    </lineage>
</organism>
<name>V143_NPVOP</name>
<evidence type="ECO:0000250" key="1"/>
<evidence type="ECO:0000255" key="2"/>
<evidence type="ECO:0000305" key="3"/>
<gene>
    <name type="primary">P143</name>
    <name type="ORF">ORF96</name>
</gene>
<feature type="chain" id="PRO_0000132854" description="ATP-dependent DNA helicase P143">
    <location>
        <begin position="1"/>
        <end position="1223"/>
    </location>
</feature>
<feature type="DNA-binding region" description="H-T-H motif" evidence="2">
    <location>
        <begin position="967"/>
        <end position="981"/>
    </location>
</feature>
<feature type="short sequence motif" description="Nuclear localization signal" evidence="2">
    <location>
        <begin position="692"/>
        <end position="701"/>
    </location>
</feature>
<feature type="binding site" evidence="2">
    <location>
        <begin position="919"/>
        <end position="926"/>
    </location>
    <ligand>
        <name>ATP</name>
        <dbReference type="ChEBI" id="CHEBI:30616"/>
    </ligand>
</feature>
<sequence length="1223" mass="140497">MNSILSRLFRDVTGDEEYAVNSLRDANRLIIIDTDTGTRRLLEHVSNFRRFLNTIRSDAAGACARHQRAARHDDEEEAPPAARVSFAGHSLVLENNDFCVFVKPFLLKRHYDEIKNYLKLDRFFKSDNPEHTNMCVQAGDYCYWPNWPASQAVSFTGWQLYLYVEFGIVVESTVPIIHNRRLGPVDLFVFNPRTFLNIEMNLSTNEAPPVKLFVNGKFDFEKKVAESGKAVESLFEIKMANGATATCKMIANLVNSNKNLFEVIRDNINLEECVTTPKYRHIIDVNLTKLRQFAHDGAVLAPPVERAFRAPTVTTILSASSENAEVIQSEIDAALVKVREGMVKVMAEFNRSDDPDLLQAYFKESGFKNFHFLLFNVWKQITKRDKKSFRETDMKLFFELVCETLFGNDSDALATALVKCEPFTTRGVATFNSLCDHWHCFKGVNPYTLLGSYYGAHYFIYLKLTSSDAHECDDPWAFNYKNAMECKVPPKALGEAFFIKVENVVTQVTLVFNGEHYQIVKKDDELYKLVETNPYKLQNIKFNNWKYMYHTKYGVYNVVTDDFYSNCPFLLGTTMPGTFKRPDDPPYLPEAVFAHMLATSAEERDILRTYHIAKLCRDVKMVKVNLGTVNLLGDCAPCKLDARLRLNDLFRELWNLDDDSLVTLALYVNKLRVEDIVHNFKCGACRASVQERKCRCVQKIKINRQALKTCLIFDLFVGDPELTQLMWMLIFATNKLYINTALIVTTSKLVAQHAHFFTKEHIKIAAILHRDLHKIEFVDTLMADVCNHDAFLAYLQHAVANEPAAAPAADNAVAKFYAHYANAANILHKYKNLWWDKIILARDSDTLSSWLTRFYLRVILSKMDVQNYPVAYLTQVVEGYLYFKRYTNFNHASSYMLMHFAASLSVPTDYGRKAVYLPGVPLSGKSTFFELLDFLVLMHKFDDDTHTGASKETSDKEVSNLNSEVYTINELKKCSESFFKKHADSSKSDSKSRKYQGLLKYEANYKMLIVNNNPLYVDDYDDGVQNRFLIVYTDHKFLPHVRFSGSVYHHILTKQYPQEPMVVDALKDSVRVFLAHVVRYQREPQTGLVPYKTLLDSDPVHQHNLTRLSVNNSPMYAVIYILNIKTAPRSANTFVTEEKMQEMIGYATLHLKSFLHPSFTQYNAAKNINAGTARSFVFDEKILLQQIKDKFKNNYDERGCKFNNLTMALNKLDININVPQFKC</sequence>
<comment type="function">
    <text evidence="1">Essential for the initiation of viral DNA replication, it may contribute to other functions such as controlling the switch to the late phase and leading to the inhibition of host protein synthesis. Required for late and very late gene expression (By similarity).</text>
</comment>
<comment type="catalytic activity">
    <reaction>
        <text>ATP + H2O = ADP + phosphate + H(+)</text>
        <dbReference type="Rhea" id="RHEA:13065"/>
        <dbReference type="ChEBI" id="CHEBI:15377"/>
        <dbReference type="ChEBI" id="CHEBI:15378"/>
        <dbReference type="ChEBI" id="CHEBI:30616"/>
        <dbReference type="ChEBI" id="CHEBI:43474"/>
        <dbReference type="ChEBI" id="CHEBI:456216"/>
        <dbReference type="EC" id="3.6.4.12"/>
    </reaction>
</comment>
<comment type="subcellular location">
    <subcellularLocation>
        <location evidence="3">Host nucleus</location>
    </subcellularLocation>
</comment>
<organismHost>
    <name type="scientific">Orgyia pseudotsugata</name>
    <name type="common">Douglas-fir tussock moth</name>
    <dbReference type="NCBI Taxonomy" id="33414"/>
</organismHost>
<proteinExistence type="inferred from homology"/>
<keyword id="KW-0067">ATP-binding</keyword>
<keyword id="KW-0235">DNA replication</keyword>
<keyword id="KW-0238">DNA-binding</keyword>
<keyword id="KW-0244">Early protein</keyword>
<keyword id="KW-0347">Helicase</keyword>
<keyword id="KW-1048">Host nucleus</keyword>
<keyword id="KW-0378">Hydrolase</keyword>
<keyword id="KW-0547">Nucleotide-binding</keyword>
<keyword id="KW-1185">Reference proteome</keyword>
<protein>
    <recommendedName>
        <fullName>ATP-dependent DNA helicase P143</fullName>
        <ecNumber>3.6.4.12</ecNumber>
    </recommendedName>
</protein>
<dbReference type="EC" id="3.6.4.12"/>
<dbReference type="EMBL" id="U39146">
    <property type="protein sequence ID" value="AAB60602.1"/>
    <property type="molecule type" value="Genomic_DNA"/>
</dbReference>
<dbReference type="EMBL" id="U75930">
    <property type="protein sequence ID" value="AAC59095.1"/>
    <property type="molecule type" value="Genomic_DNA"/>
</dbReference>
<dbReference type="RefSeq" id="NP_046252.1">
    <property type="nucleotide sequence ID" value="NC_001875.2"/>
</dbReference>
<dbReference type="KEGG" id="vg:912107"/>
<dbReference type="Proteomes" id="UP000009248">
    <property type="component" value="Genome"/>
</dbReference>
<dbReference type="GO" id="GO:0042025">
    <property type="term" value="C:host cell nucleus"/>
    <property type="evidence" value="ECO:0007669"/>
    <property type="project" value="UniProtKB-SubCell"/>
</dbReference>
<dbReference type="GO" id="GO:0005524">
    <property type="term" value="F:ATP binding"/>
    <property type="evidence" value="ECO:0007669"/>
    <property type="project" value="UniProtKB-KW"/>
</dbReference>
<dbReference type="GO" id="GO:0016887">
    <property type="term" value="F:ATP hydrolysis activity"/>
    <property type="evidence" value="ECO:0007669"/>
    <property type="project" value="RHEA"/>
</dbReference>
<dbReference type="GO" id="GO:0003677">
    <property type="term" value="F:DNA binding"/>
    <property type="evidence" value="ECO:0007669"/>
    <property type="project" value="UniProtKB-KW"/>
</dbReference>
<dbReference type="GO" id="GO:0003678">
    <property type="term" value="F:DNA helicase activity"/>
    <property type="evidence" value="ECO:0007669"/>
    <property type="project" value="InterPro"/>
</dbReference>
<dbReference type="GO" id="GO:0006260">
    <property type="term" value="P:DNA replication"/>
    <property type="evidence" value="ECO:0007669"/>
    <property type="project" value="UniProtKB-KW"/>
</dbReference>
<dbReference type="GO" id="GO:0019079">
    <property type="term" value="P:viral genome replication"/>
    <property type="evidence" value="ECO:0000250"/>
    <property type="project" value="UniProtKB"/>
</dbReference>
<dbReference type="InterPro" id="IPR006824">
    <property type="entry name" value="DNA_helicase_Baculovir"/>
</dbReference>
<dbReference type="Pfam" id="PF04735">
    <property type="entry name" value="Baculo_helicase"/>
    <property type="match status" value="2"/>
</dbReference>
<accession>Q83950</accession>
<accession>O12557</accession>
<accession>O12846</accession>
<reference key="1">
    <citation type="journal article" date="1996" name="J. Gen. Virol.">
        <title>The DNA polymerase and helicase genes of a baculovirus of Orgyia pseudosugata.</title>
        <authorList>
            <person name="Ahrens C.H."/>
            <person name="Rohrmann G.F."/>
        </authorList>
    </citation>
    <scope>NUCLEOTIDE SEQUENCE [GENOMIC DNA]</scope>
</reference>
<reference key="2">
    <citation type="journal article" date="1997" name="Virology">
        <title>The sequence of the Orgyia pseudotsugata multinucleocapsid nuclear polyhedrosis virus genome.</title>
        <authorList>
            <person name="Ahrens C.H."/>
            <person name="Russell R.R."/>
            <person name="Funk C.J."/>
            <person name="Evans J."/>
            <person name="Harwood S."/>
            <person name="Rohrmann G.F."/>
        </authorList>
    </citation>
    <scope>NUCLEOTIDE SEQUENCE [LARGE SCALE GENOMIC DNA]</scope>
</reference>